<evidence type="ECO:0000250" key="1"/>
<evidence type="ECO:0000305" key="2"/>
<proteinExistence type="inferred from homology"/>
<accession>A4QLQ4</accession>
<sequence>MIKNAFISFQEKKEESKGSVEFQVFSFTNKIRRLTSHLELHRKDYLSQRGLRKILGKRQRLLAYLSKKNRVRYKELIKQLNIRELKTR</sequence>
<feature type="chain" id="PRO_0000354265" description="Small ribosomal subunit protein uS15c">
    <location>
        <begin position="1"/>
        <end position="88"/>
    </location>
</feature>
<geneLocation type="chloroplast"/>
<reference key="1">
    <citation type="submission" date="2007-03" db="EMBL/GenBank/DDBJ databases">
        <title>Sequencing analysis of Lobularia maritima chloroplast DNA.</title>
        <authorList>
            <person name="Hosouchi T."/>
            <person name="Tsuruoka H."/>
            <person name="Kotani H."/>
        </authorList>
    </citation>
    <scope>NUCLEOTIDE SEQUENCE [LARGE SCALE GENOMIC DNA]</scope>
</reference>
<protein>
    <recommendedName>
        <fullName evidence="2">Small ribosomal subunit protein uS15c</fullName>
    </recommendedName>
    <alternativeName>
        <fullName>30S ribosomal protein S15, chloroplastic</fullName>
    </alternativeName>
</protein>
<organism>
    <name type="scientific">Lobularia maritima</name>
    <name type="common">Sweet alyssum</name>
    <name type="synonym">Alyssum maritimum</name>
    <dbReference type="NCBI Taxonomy" id="226051"/>
    <lineage>
        <taxon>Eukaryota</taxon>
        <taxon>Viridiplantae</taxon>
        <taxon>Streptophyta</taxon>
        <taxon>Embryophyta</taxon>
        <taxon>Tracheophyta</taxon>
        <taxon>Spermatophyta</taxon>
        <taxon>Magnoliopsida</taxon>
        <taxon>eudicotyledons</taxon>
        <taxon>Gunneridae</taxon>
        <taxon>Pentapetalae</taxon>
        <taxon>rosids</taxon>
        <taxon>malvids</taxon>
        <taxon>Brassicales</taxon>
        <taxon>Brassicaceae</taxon>
        <taxon>Anastaticeae</taxon>
        <taxon>Lobularia</taxon>
    </lineage>
</organism>
<name>RR15_LOBMA</name>
<comment type="subunit">
    <text evidence="1">Part of the 30S ribosomal subunit.</text>
</comment>
<comment type="subcellular location">
    <subcellularLocation>
        <location>Plastid</location>
        <location>Chloroplast</location>
    </subcellularLocation>
</comment>
<comment type="similarity">
    <text evidence="2">Belongs to the universal ribosomal protein uS15 family.</text>
</comment>
<dbReference type="EMBL" id="AP009375">
    <property type="protein sequence ID" value="BAF50609.1"/>
    <property type="molecule type" value="Genomic_DNA"/>
</dbReference>
<dbReference type="RefSeq" id="YP_001123784.1">
    <property type="nucleotide sequence ID" value="NC_009274.1"/>
</dbReference>
<dbReference type="SMR" id="A4QLQ4"/>
<dbReference type="GeneID" id="4964895"/>
<dbReference type="GO" id="GO:0009507">
    <property type="term" value="C:chloroplast"/>
    <property type="evidence" value="ECO:0007669"/>
    <property type="project" value="UniProtKB-SubCell"/>
</dbReference>
<dbReference type="GO" id="GO:1990904">
    <property type="term" value="C:ribonucleoprotein complex"/>
    <property type="evidence" value="ECO:0007669"/>
    <property type="project" value="UniProtKB-KW"/>
</dbReference>
<dbReference type="GO" id="GO:0005840">
    <property type="term" value="C:ribosome"/>
    <property type="evidence" value="ECO:0007669"/>
    <property type="project" value="UniProtKB-KW"/>
</dbReference>
<dbReference type="GO" id="GO:0003735">
    <property type="term" value="F:structural constituent of ribosome"/>
    <property type="evidence" value="ECO:0007669"/>
    <property type="project" value="InterPro"/>
</dbReference>
<dbReference type="GO" id="GO:0006412">
    <property type="term" value="P:translation"/>
    <property type="evidence" value="ECO:0007669"/>
    <property type="project" value="UniProtKB-UniRule"/>
</dbReference>
<dbReference type="CDD" id="cd00353">
    <property type="entry name" value="Ribosomal_S15p_S13e"/>
    <property type="match status" value="1"/>
</dbReference>
<dbReference type="FunFam" id="1.10.287.10:FF:000011">
    <property type="entry name" value="30S ribosomal protein S15, chloroplastic"/>
    <property type="match status" value="1"/>
</dbReference>
<dbReference type="Gene3D" id="1.10.287.10">
    <property type="entry name" value="S15/NS1, RNA-binding"/>
    <property type="match status" value="1"/>
</dbReference>
<dbReference type="HAMAP" id="MF_01343_B">
    <property type="entry name" value="Ribosomal_uS15_B"/>
    <property type="match status" value="1"/>
</dbReference>
<dbReference type="InterPro" id="IPR000589">
    <property type="entry name" value="Ribosomal_uS15"/>
</dbReference>
<dbReference type="InterPro" id="IPR005290">
    <property type="entry name" value="Ribosomal_uS15_bac-type"/>
</dbReference>
<dbReference type="InterPro" id="IPR009068">
    <property type="entry name" value="uS15_NS1_RNA-bd_sf"/>
</dbReference>
<dbReference type="NCBIfam" id="TIGR00952">
    <property type="entry name" value="S15_bact"/>
    <property type="match status" value="1"/>
</dbReference>
<dbReference type="PANTHER" id="PTHR23321">
    <property type="entry name" value="RIBOSOMAL PROTEIN S15, BACTERIAL AND ORGANELLAR"/>
    <property type="match status" value="1"/>
</dbReference>
<dbReference type="PANTHER" id="PTHR23321:SF26">
    <property type="entry name" value="SMALL RIBOSOMAL SUBUNIT PROTEIN US15M"/>
    <property type="match status" value="1"/>
</dbReference>
<dbReference type="Pfam" id="PF00312">
    <property type="entry name" value="Ribosomal_S15"/>
    <property type="match status" value="1"/>
</dbReference>
<dbReference type="SMART" id="SM01387">
    <property type="entry name" value="Ribosomal_S15"/>
    <property type="match status" value="1"/>
</dbReference>
<dbReference type="SUPFAM" id="SSF47060">
    <property type="entry name" value="S15/NS1 RNA-binding domain"/>
    <property type="match status" value="1"/>
</dbReference>
<dbReference type="PROSITE" id="PS00362">
    <property type="entry name" value="RIBOSOMAL_S15"/>
    <property type="match status" value="1"/>
</dbReference>
<gene>
    <name type="primary">rps15</name>
</gene>
<keyword id="KW-0150">Chloroplast</keyword>
<keyword id="KW-0934">Plastid</keyword>
<keyword id="KW-0687">Ribonucleoprotein</keyword>
<keyword id="KW-0689">Ribosomal protein</keyword>